<comment type="function">
    <text evidence="2">A structure-specific endonuclease that binds and cleaves the four-way Holliday junctions in DNA created during repair and rearrangement by the ubiquitous process of homologous recombination. Introduces paired nicks in opposing strands; on immobile junction cleaves 2 bases 3' of the junction point, on mobile strands the cleavage site varies. Cleaves Y and loop-out structures with much lower efficiency. Binds 4-way junction DNA but not sequence-identical linear dsDNA.</text>
</comment>
<comment type="catalytic activity">
    <reaction evidence="2">
        <text>Endonucleolytic cleavage at a junction such as a reciprocal single-stranded crossover between two homologous DNA duplexes (Holliday junction).</text>
        <dbReference type="EC" id="3.1.21.10"/>
    </reaction>
</comment>
<comment type="cofactor">
    <cofactor evidence="2">
        <name>Mg(2+)</name>
        <dbReference type="ChEBI" id="CHEBI:18420"/>
    </cofactor>
</comment>
<comment type="subunit">
    <text evidence="4">Homodimer.</text>
</comment>
<comment type="similarity">
    <text evidence="4">Belongs to the Holliday junction resolvase Hjc family. Hje subfamily.</text>
</comment>
<protein>
    <recommendedName>
        <fullName evidence="4">Crossover junction endodeoxyribonuclease</fullName>
        <ecNumber evidence="2">3.1.21.10</ecNumber>
    </recommendedName>
    <alternativeName>
        <fullName evidence="3">Holliday junction resolvase</fullName>
    </alternativeName>
</protein>
<evidence type="ECO:0000255" key="1"/>
<evidence type="ECO:0000269" key="2">
    <source>
    </source>
</evidence>
<evidence type="ECO:0000303" key="3">
    <source>
    </source>
</evidence>
<evidence type="ECO:0000305" key="4"/>
<feature type="chain" id="PRO_0000342290" description="Crossover junction endodeoxyribonuclease">
    <location>
        <begin position="1"/>
        <end position="121"/>
    </location>
</feature>
<feature type="active site" evidence="1">
    <location>
        <position position="31"/>
    </location>
</feature>
<feature type="binding site" evidence="1">
    <location>
        <position position="11"/>
    </location>
    <ligand>
        <name>Mg(2+)</name>
        <dbReference type="ChEBI" id="CHEBI:18420"/>
        <label>2</label>
    </ligand>
</feature>
<feature type="binding site" evidence="1">
    <location>
        <position position="40"/>
    </location>
    <ligand>
        <name>Mg(2+)</name>
        <dbReference type="ChEBI" id="CHEBI:18420"/>
        <label>1</label>
    </ligand>
</feature>
<feature type="binding site" evidence="1">
    <location>
        <position position="40"/>
    </location>
    <ligand>
        <name>Mg(2+)</name>
        <dbReference type="ChEBI" id="CHEBI:18420"/>
        <label>2</label>
    </ligand>
</feature>
<feature type="binding site" evidence="1">
    <location>
        <position position="53"/>
    </location>
    <ligand>
        <name>Mg(2+)</name>
        <dbReference type="ChEBI" id="CHEBI:18420"/>
        <label>1</label>
    </ligand>
</feature>
<feature type="site" description="Transition state stabilizer" evidence="1">
    <location>
        <position position="55"/>
    </location>
</feature>
<dbReference type="EC" id="3.1.21.10" evidence="2"/>
<dbReference type="EMBL" id="AJ306728">
    <property type="protein sequence ID" value="CAC37359.1"/>
    <property type="molecule type" value="Genomic_DNA"/>
</dbReference>
<dbReference type="EMBL" id="AJ414696">
    <property type="protein sequence ID" value="CAC93982.1"/>
    <property type="molecule type" value="Genomic_DNA"/>
</dbReference>
<dbReference type="EMBL" id="AJ748296">
    <property type="protein sequence ID" value="CAG38846.1"/>
    <property type="molecule type" value="Genomic_DNA"/>
</dbReference>
<dbReference type="RefSeq" id="NP_666615.1">
    <property type="nucleotide sequence ID" value="NC_004087.1"/>
</dbReference>
<dbReference type="SMR" id="Q98VP9"/>
<dbReference type="KEGG" id="vg:951380"/>
<dbReference type="OrthoDB" id="14179at10239"/>
<dbReference type="Proteomes" id="UP000002270">
    <property type="component" value="Genome"/>
</dbReference>
<dbReference type="Proteomes" id="UP000223181">
    <property type="component" value="Segment"/>
</dbReference>
<dbReference type="GO" id="GO:0003677">
    <property type="term" value="F:DNA binding"/>
    <property type="evidence" value="ECO:0007669"/>
    <property type="project" value="UniProtKB-KW"/>
</dbReference>
<dbReference type="GO" id="GO:0004519">
    <property type="term" value="F:endonuclease activity"/>
    <property type="evidence" value="ECO:0007669"/>
    <property type="project" value="UniProtKB-KW"/>
</dbReference>
<dbReference type="GO" id="GO:0046872">
    <property type="term" value="F:metal ion binding"/>
    <property type="evidence" value="ECO:0007669"/>
    <property type="project" value="UniProtKB-KW"/>
</dbReference>
<dbReference type="GO" id="GO:0006310">
    <property type="term" value="P:DNA recombination"/>
    <property type="evidence" value="ECO:0007669"/>
    <property type="project" value="UniProtKB-KW"/>
</dbReference>
<dbReference type="GO" id="GO:0006281">
    <property type="term" value="P:DNA repair"/>
    <property type="evidence" value="ECO:0007669"/>
    <property type="project" value="UniProtKB-KW"/>
</dbReference>
<dbReference type="Gene3D" id="3.40.1350.10">
    <property type="match status" value="1"/>
</dbReference>
<dbReference type="InterPro" id="IPR002732">
    <property type="entry name" value="Hjc"/>
</dbReference>
<dbReference type="InterPro" id="IPR014428">
    <property type="entry name" value="Hjc_arc"/>
</dbReference>
<dbReference type="InterPro" id="IPR011335">
    <property type="entry name" value="Restrct_endonuc-II-like"/>
</dbReference>
<dbReference type="InterPro" id="IPR011856">
    <property type="entry name" value="tRNA_endonuc-like_dom_sf"/>
</dbReference>
<dbReference type="PANTHER" id="PTHR39651">
    <property type="entry name" value="HOLLIDAY JUNCTION RESOLVASE HJC"/>
    <property type="match status" value="1"/>
</dbReference>
<dbReference type="PANTHER" id="PTHR39651:SF1">
    <property type="entry name" value="HOLLIDAY JUNCTION RESOLVASE HJC"/>
    <property type="match status" value="1"/>
</dbReference>
<dbReference type="Pfam" id="PF01870">
    <property type="entry name" value="Hjc"/>
    <property type="match status" value="1"/>
</dbReference>
<dbReference type="PIRSF" id="PIRSF004985">
    <property type="entry name" value="Hlld_jn_rslvs_ar"/>
    <property type="match status" value="1"/>
</dbReference>
<dbReference type="SUPFAM" id="SSF52980">
    <property type="entry name" value="Restriction endonuclease-like"/>
    <property type="match status" value="1"/>
</dbReference>
<name>HJC_SIRV1</name>
<organismHost>
    <name type="scientific">Saccharolobus islandicus</name>
    <name type="common">Sulfolobus islandicus</name>
    <dbReference type="NCBI Taxonomy" id="43080"/>
</organismHost>
<reference key="1">
    <citation type="journal article" date="2001" name="Virology">
        <title>Sequences and replication of genomes of the archaeal rudiviruses SIRV1 and SIRV2: relationships to the archaeal lipothrixvirus SIFV and some eukaryal viruses.</title>
        <authorList>
            <person name="Peng X."/>
            <person name="Blum H."/>
            <person name="She Q."/>
            <person name="Mallok S."/>
            <person name="Bruegger K."/>
            <person name="Garrett R.A."/>
            <person name="Zillig W."/>
            <person name="Prangishvili D."/>
        </authorList>
    </citation>
    <scope>NUCLEOTIDE SEQUENCE [LARGE SCALE GENOMIC DNA]</scope>
    <source>
        <strain>Isolate variant VIII</strain>
    </source>
</reference>
<reference key="2">
    <citation type="journal article" date="2004" name="Mol. Microbiol.">
        <title>Multiple variants of the archaeal DNA rudivirus SIRV1 in a single host and a novel mechanism of genomic variation.</title>
        <authorList>
            <person name="Peng X."/>
            <person name="Kessler A."/>
            <person name="Phan H."/>
            <person name="Garrett R.A."/>
            <person name="Prangishvili D."/>
        </authorList>
    </citation>
    <scope>NUCLEOTIDE SEQUENCE [LARGE SCALE GENOMIC DNA]</scope>
    <source>
        <strain>Isolate variant XX</strain>
    </source>
</reference>
<reference key="3">
    <citation type="journal article" date="2001" name="J. Mol. Biol.">
        <title>Holliday junction resolving enzymes of archaeal viruses SIRV1 and SIRV2.</title>
        <authorList>
            <person name="Birkenbihl R.P."/>
            <person name="Neef K."/>
            <person name="Prangishvili D."/>
            <person name="Kemper B."/>
        </authorList>
    </citation>
    <scope>FUNCTION AS A HOLLIDAY JUNCTION RESOLVASE</scope>
    <scope>CATALYTIC ACTIVITY</scope>
    <scope>COFACTOR</scope>
    <scope>DNA-BINDING</scope>
    <source>
        <strain>KVEM10H3</strain>
    </source>
</reference>
<proteinExistence type="evidence at protein level"/>
<organism>
    <name type="scientific">Sulfolobus islandicus rod-shaped virus 1</name>
    <name type="common">SIRV-1</name>
    <name type="synonym">Sulfolobus virus SIRV-1</name>
    <dbReference type="NCBI Taxonomy" id="157898"/>
    <lineage>
        <taxon>Viruses</taxon>
        <taxon>Adnaviria</taxon>
        <taxon>Zilligvirae</taxon>
        <taxon>Taleaviricota</taxon>
        <taxon>Tokiviricetes</taxon>
        <taxon>Ligamenvirales</taxon>
        <taxon>Rudiviridae</taxon>
        <taxon>Icerudivirus</taxon>
        <taxon>Icerudivirus SIRV1</taxon>
    </lineage>
</organism>
<gene>
    <name type="primary">hjc</name>
    <name type="ORF">121</name>
</gene>
<sequence length="121" mass="14190">MNIRQSGKYYEYKTLEILEKNGFKALRIPVSGTGKQALPDLIATKNNTIYPIEVKSTSKDVVTVRNFQIEKLFKFCEIFNFCECHPLVTVYYKKYKIVIVYELSQDVRTKEKIKFKYGINS</sequence>
<keyword id="KW-0227">DNA damage</keyword>
<keyword id="KW-0233">DNA recombination</keyword>
<keyword id="KW-0234">DNA repair</keyword>
<keyword id="KW-0238">DNA-binding</keyword>
<keyword id="KW-0255">Endonuclease</keyword>
<keyword id="KW-0378">Hydrolase</keyword>
<keyword id="KW-0460">Magnesium</keyword>
<keyword id="KW-0479">Metal-binding</keyword>
<keyword id="KW-0540">Nuclease</keyword>
<keyword id="KW-1185">Reference proteome</keyword>
<accession>Q98VP9</accession>
<accession>Q5TJ92</accession>